<organism>
    <name type="scientific">Anthoceros angustus</name>
    <name type="common">Hornwort</name>
    <name type="synonym">Anthoceros formosae</name>
    <dbReference type="NCBI Taxonomy" id="48387"/>
    <lineage>
        <taxon>Eukaryota</taxon>
        <taxon>Viridiplantae</taxon>
        <taxon>Streptophyta</taxon>
        <taxon>Embryophyta</taxon>
        <taxon>Anthocerotophyta</taxon>
        <taxon>Anthocerotopsida</taxon>
        <taxon>Anthocerotidae</taxon>
        <taxon>Anthocerotales</taxon>
        <taxon>Anthocerotaceae</taxon>
        <taxon>Anthoceros</taxon>
    </lineage>
</organism>
<accession>Q31795</accession>
<accession>Q31797</accession>
<protein>
    <recommendedName>
        <fullName evidence="1">Ribulose bisphosphate carboxylase large chain</fullName>
        <shortName evidence="1">RuBisCO large subunit</shortName>
        <ecNumber evidence="1">4.1.1.39</ecNumber>
    </recommendedName>
</protein>
<reference key="1">
    <citation type="journal article" date="1996" name="Nucleic Acids Res.">
        <title>Extensive RNA editing of U to C in addition to C to U substitution in the rbcL transcripts of hornwort chloroplasts and the origin of RNA editing in green plants.</title>
        <authorList>
            <person name="Yoshinaga K."/>
            <person name="Iinuma H."/>
            <person name="Masuzawa T."/>
            <person name="Ueda K."/>
        </authorList>
    </citation>
    <scope>NUCLEOTIDE SEQUENCE [MRNA]</scope>
    <scope>RNA EDITING</scope>
    <source>
        <tissue>Thallus</tissue>
    </source>
</reference>
<reference key="2">
    <citation type="journal article" date="2003" name="Nucleic Acids Res.">
        <title>The complete nucleotide sequence of the hornwort (Anthoceros formosae) chloroplast genome: insight into the earliest land plants.</title>
        <authorList>
            <person name="Kugita M."/>
            <person name="Kaneko A."/>
            <person name="Yamamoto Y."/>
            <person name="Takeya Y."/>
            <person name="Matsumoto T."/>
            <person name="Yoshinaga K."/>
        </authorList>
    </citation>
    <scope>NUCLEOTIDE SEQUENCE [LARGE SCALE GENOMIC DNA]</scope>
    <scope>RNA EDITING</scope>
</reference>
<reference key="3">
    <citation type="journal article" date="2003" name="Nucleic Acids Res.">
        <title>RNA editing in hornwort chloroplasts makes more than half the genes functional.</title>
        <authorList>
            <person name="Kugita M."/>
            <person name="Yamamoto Y."/>
            <person name="Fujikawa T."/>
            <person name="Matsumoto T."/>
            <person name="Yoshinaga K."/>
        </authorList>
    </citation>
    <scope>NUCLEOTIDE SEQUENCE [MRNA]</scope>
    <scope>RNA EDITING</scope>
    <source>
        <tissue>Thallus</tissue>
    </source>
</reference>
<dbReference type="EC" id="4.1.1.39" evidence="1"/>
<dbReference type="EMBL" id="D43695">
    <property type="protein sequence ID" value="BAA07796.1"/>
    <property type="status" value="ALT_SEQ"/>
    <property type="molecule type" value="Genomic_DNA"/>
</dbReference>
<dbReference type="EMBL" id="D43696">
    <property type="protein sequence ID" value="BAA07798.1"/>
    <property type="status" value="ALT_SEQ"/>
    <property type="molecule type" value="mRNA"/>
</dbReference>
<dbReference type="EMBL" id="AB086179">
    <property type="protein sequence ID" value="BAC55357.1"/>
    <property type="molecule type" value="Genomic_DNA"/>
</dbReference>
<dbReference type="EMBL" id="AB087449">
    <property type="protein sequence ID" value="BAC55453.1"/>
    <property type="molecule type" value="mRNA"/>
</dbReference>
<dbReference type="PIR" id="S71142">
    <property type="entry name" value="S71142"/>
</dbReference>
<dbReference type="RefSeq" id="NP_777421.1">
    <property type="nucleotide sequence ID" value="NC_004543.1"/>
</dbReference>
<dbReference type="PDB" id="9CHZ">
    <property type="method" value="EM"/>
    <property type="resolution" value="2.90 A"/>
    <property type="chains" value="A/B/C/D/E/F/G/H=1-475"/>
</dbReference>
<dbReference type="PDB" id="9CI1">
    <property type="method" value="EM"/>
    <property type="resolution" value="2.88 A"/>
    <property type="chains" value="A/B/C/D/E/F/G/H=1-475"/>
</dbReference>
<dbReference type="PDB" id="9CI2">
    <property type="method" value="EM"/>
    <property type="resolution" value="2.90 A"/>
    <property type="chains" value="A/B/C/D/E/F/G/H=1-475"/>
</dbReference>
<dbReference type="PDB" id="9CK5">
    <property type="method" value="EM"/>
    <property type="resolution" value="3.00 A"/>
    <property type="chains" value="A/B/C/D/E/F/G/H=1-475"/>
</dbReference>
<dbReference type="PDBsum" id="9CHZ"/>
<dbReference type="PDBsum" id="9CI1"/>
<dbReference type="PDBsum" id="9CI2"/>
<dbReference type="PDBsum" id="9CK5"/>
<dbReference type="SMR" id="Q31795"/>
<dbReference type="GeneID" id="2553411"/>
<dbReference type="GO" id="GO:0009507">
    <property type="term" value="C:chloroplast"/>
    <property type="evidence" value="ECO:0007669"/>
    <property type="project" value="UniProtKB-SubCell"/>
</dbReference>
<dbReference type="GO" id="GO:0000287">
    <property type="term" value="F:magnesium ion binding"/>
    <property type="evidence" value="ECO:0007669"/>
    <property type="project" value="UniProtKB-UniRule"/>
</dbReference>
<dbReference type="GO" id="GO:0004497">
    <property type="term" value="F:monooxygenase activity"/>
    <property type="evidence" value="ECO:0007669"/>
    <property type="project" value="UniProtKB-KW"/>
</dbReference>
<dbReference type="GO" id="GO:0016984">
    <property type="term" value="F:ribulose-bisphosphate carboxylase activity"/>
    <property type="evidence" value="ECO:0007669"/>
    <property type="project" value="UniProtKB-UniRule"/>
</dbReference>
<dbReference type="GO" id="GO:0009853">
    <property type="term" value="P:photorespiration"/>
    <property type="evidence" value="ECO:0007669"/>
    <property type="project" value="UniProtKB-KW"/>
</dbReference>
<dbReference type="GO" id="GO:0019253">
    <property type="term" value="P:reductive pentose-phosphate cycle"/>
    <property type="evidence" value="ECO:0007669"/>
    <property type="project" value="UniProtKB-UniRule"/>
</dbReference>
<dbReference type="CDD" id="cd08212">
    <property type="entry name" value="RuBisCO_large_I"/>
    <property type="match status" value="1"/>
</dbReference>
<dbReference type="FunFam" id="3.20.20.110:FF:000001">
    <property type="entry name" value="Ribulose bisphosphate carboxylase large chain"/>
    <property type="match status" value="1"/>
</dbReference>
<dbReference type="FunFam" id="3.30.70.150:FF:000001">
    <property type="entry name" value="Ribulose bisphosphate carboxylase large chain"/>
    <property type="match status" value="1"/>
</dbReference>
<dbReference type="Gene3D" id="3.20.20.110">
    <property type="entry name" value="Ribulose bisphosphate carboxylase, large subunit, C-terminal domain"/>
    <property type="match status" value="1"/>
</dbReference>
<dbReference type="Gene3D" id="3.30.70.150">
    <property type="entry name" value="RuBisCO large subunit, N-terminal domain"/>
    <property type="match status" value="1"/>
</dbReference>
<dbReference type="HAMAP" id="MF_01338">
    <property type="entry name" value="RuBisCO_L_type1"/>
    <property type="match status" value="1"/>
</dbReference>
<dbReference type="InterPro" id="IPR033966">
    <property type="entry name" value="RuBisCO"/>
</dbReference>
<dbReference type="InterPro" id="IPR020878">
    <property type="entry name" value="RuBisCo_large_chain_AS"/>
</dbReference>
<dbReference type="InterPro" id="IPR000685">
    <property type="entry name" value="RuBisCO_lsu_C"/>
</dbReference>
<dbReference type="InterPro" id="IPR036376">
    <property type="entry name" value="RuBisCO_lsu_C_sf"/>
</dbReference>
<dbReference type="InterPro" id="IPR017443">
    <property type="entry name" value="RuBisCO_lsu_fd_N"/>
</dbReference>
<dbReference type="InterPro" id="IPR036422">
    <property type="entry name" value="RuBisCO_lsu_N_sf"/>
</dbReference>
<dbReference type="InterPro" id="IPR020888">
    <property type="entry name" value="RuBisCO_lsuI"/>
</dbReference>
<dbReference type="NCBIfam" id="NF003252">
    <property type="entry name" value="PRK04208.1"/>
    <property type="match status" value="1"/>
</dbReference>
<dbReference type="PANTHER" id="PTHR42704">
    <property type="entry name" value="RIBULOSE BISPHOSPHATE CARBOXYLASE"/>
    <property type="match status" value="1"/>
</dbReference>
<dbReference type="PANTHER" id="PTHR42704:SF17">
    <property type="entry name" value="RIBULOSE BISPHOSPHATE CARBOXYLASE LARGE CHAIN"/>
    <property type="match status" value="1"/>
</dbReference>
<dbReference type="Pfam" id="PF00016">
    <property type="entry name" value="RuBisCO_large"/>
    <property type="match status" value="1"/>
</dbReference>
<dbReference type="Pfam" id="PF02788">
    <property type="entry name" value="RuBisCO_large_N"/>
    <property type="match status" value="1"/>
</dbReference>
<dbReference type="SFLD" id="SFLDG01052">
    <property type="entry name" value="RuBisCO"/>
    <property type="match status" value="1"/>
</dbReference>
<dbReference type="SFLD" id="SFLDS00014">
    <property type="entry name" value="RuBisCO"/>
    <property type="match status" value="1"/>
</dbReference>
<dbReference type="SFLD" id="SFLDG00301">
    <property type="entry name" value="RuBisCO-like_proteins"/>
    <property type="match status" value="1"/>
</dbReference>
<dbReference type="SUPFAM" id="SSF51649">
    <property type="entry name" value="RuBisCo, C-terminal domain"/>
    <property type="match status" value="1"/>
</dbReference>
<dbReference type="SUPFAM" id="SSF54966">
    <property type="entry name" value="RuBisCO, large subunit, small (N-terminal) domain"/>
    <property type="match status" value="1"/>
</dbReference>
<dbReference type="PROSITE" id="PS00157">
    <property type="entry name" value="RUBISCO_LARGE"/>
    <property type="match status" value="1"/>
</dbReference>
<gene>
    <name evidence="1" type="primary">rbcL</name>
</gene>
<feature type="propeptide" id="PRO_0000031117" evidence="1">
    <location>
        <begin position="1"/>
        <end position="2"/>
    </location>
</feature>
<feature type="chain" id="PRO_0000031118" description="Ribulose bisphosphate carboxylase large chain">
    <location>
        <begin position="3"/>
        <end position="475"/>
    </location>
</feature>
<feature type="active site" description="Proton acceptor" evidence="1">
    <location>
        <position position="175"/>
    </location>
</feature>
<feature type="active site" description="Proton acceptor" evidence="1">
    <location>
        <position position="294"/>
    </location>
</feature>
<feature type="binding site" description="in homodimeric partner" evidence="1">
    <location>
        <position position="123"/>
    </location>
    <ligand>
        <name>substrate</name>
    </ligand>
</feature>
<feature type="binding site" evidence="1">
    <location>
        <position position="173"/>
    </location>
    <ligand>
        <name>substrate</name>
    </ligand>
</feature>
<feature type="binding site" evidence="1">
    <location>
        <position position="177"/>
    </location>
    <ligand>
        <name>substrate</name>
    </ligand>
</feature>
<feature type="binding site" description="via carbamate group" evidence="1">
    <location>
        <position position="201"/>
    </location>
    <ligand>
        <name>Mg(2+)</name>
        <dbReference type="ChEBI" id="CHEBI:18420"/>
    </ligand>
</feature>
<feature type="binding site" evidence="1">
    <location>
        <position position="203"/>
    </location>
    <ligand>
        <name>Mg(2+)</name>
        <dbReference type="ChEBI" id="CHEBI:18420"/>
    </ligand>
</feature>
<feature type="binding site" evidence="1">
    <location>
        <position position="204"/>
    </location>
    <ligand>
        <name>Mg(2+)</name>
        <dbReference type="ChEBI" id="CHEBI:18420"/>
    </ligand>
</feature>
<feature type="binding site" evidence="1">
    <location>
        <position position="295"/>
    </location>
    <ligand>
        <name>substrate</name>
    </ligand>
</feature>
<feature type="binding site" evidence="1">
    <location>
        <position position="327"/>
    </location>
    <ligand>
        <name>substrate</name>
    </ligand>
</feature>
<feature type="binding site" evidence="1">
    <location>
        <position position="379"/>
    </location>
    <ligand>
        <name>substrate</name>
    </ligand>
</feature>
<feature type="site" description="Transition state stabilizer" evidence="1">
    <location>
        <position position="334"/>
    </location>
</feature>
<feature type="modified residue" description="N-acetylproline" evidence="1">
    <location>
        <position position="3"/>
    </location>
</feature>
<feature type="modified residue" description="N6,N6,N6-trimethyllysine" evidence="1">
    <location>
        <position position="14"/>
    </location>
</feature>
<feature type="modified residue" description="N6-carboxylysine" evidence="1">
    <location>
        <position position="201"/>
    </location>
</feature>
<feature type="disulfide bond" description="Interchain; in linked form" evidence="1">
    <location>
        <position position="247"/>
    </location>
</feature>
<feature type="helix" evidence="5">
    <location>
        <begin position="20"/>
        <end position="22"/>
    </location>
</feature>
<feature type="strand" evidence="6">
    <location>
        <begin position="36"/>
        <end position="44"/>
    </location>
</feature>
<feature type="helix" evidence="6">
    <location>
        <begin position="50"/>
        <end position="60"/>
    </location>
</feature>
<feature type="strand" evidence="6">
    <location>
        <begin position="66"/>
        <end position="69"/>
    </location>
</feature>
<feature type="helix" evidence="5">
    <location>
        <begin position="70"/>
        <end position="74"/>
    </location>
</feature>
<feature type="helix" evidence="6">
    <location>
        <begin position="78"/>
        <end position="80"/>
    </location>
</feature>
<feature type="strand" evidence="6">
    <location>
        <begin position="83"/>
        <end position="89"/>
    </location>
</feature>
<feature type="strand" evidence="6">
    <location>
        <begin position="97"/>
        <end position="103"/>
    </location>
</feature>
<feature type="helix" evidence="6">
    <location>
        <begin position="105"/>
        <end position="107"/>
    </location>
</feature>
<feature type="helix" evidence="6">
    <location>
        <begin position="113"/>
        <end position="120"/>
    </location>
</feature>
<feature type="strand" evidence="6">
    <location>
        <begin position="121"/>
        <end position="124"/>
    </location>
</feature>
<feature type="strand" evidence="6">
    <location>
        <begin position="128"/>
        <end position="139"/>
    </location>
</feature>
<feature type="helix" evidence="6">
    <location>
        <begin position="142"/>
        <end position="145"/>
    </location>
</feature>
<feature type="helix" evidence="6">
    <location>
        <begin position="156"/>
        <end position="162"/>
    </location>
</feature>
<feature type="strand" evidence="6">
    <location>
        <begin position="169"/>
        <end position="173"/>
    </location>
</feature>
<feature type="strand" evidence="5">
    <location>
        <begin position="175"/>
        <end position="178"/>
    </location>
</feature>
<feature type="helix" evidence="6">
    <location>
        <begin position="182"/>
        <end position="194"/>
    </location>
</feature>
<feature type="strand" evidence="7">
    <location>
        <begin position="199"/>
        <end position="201"/>
    </location>
</feature>
<feature type="strand" evidence="5">
    <location>
        <begin position="207"/>
        <end position="209"/>
    </location>
</feature>
<feature type="helix" evidence="6">
    <location>
        <begin position="214"/>
        <end position="232"/>
    </location>
</feature>
<feature type="strand" evidence="5">
    <location>
        <begin position="239"/>
        <end position="241"/>
    </location>
</feature>
<feature type="helix" evidence="6">
    <location>
        <begin position="247"/>
        <end position="259"/>
    </location>
</feature>
<feature type="strand" evidence="6">
    <location>
        <begin position="264"/>
        <end position="272"/>
    </location>
</feature>
<feature type="helix" evidence="6">
    <location>
        <begin position="274"/>
        <end position="287"/>
    </location>
</feature>
<feature type="strand" evidence="6">
    <location>
        <begin position="290"/>
        <end position="294"/>
    </location>
</feature>
<feature type="turn" evidence="6">
    <location>
        <begin position="299"/>
        <end position="301"/>
    </location>
</feature>
<feature type="strand" evidence="6">
    <location>
        <begin position="302"/>
        <end position="309"/>
    </location>
</feature>
<feature type="helix" evidence="6">
    <location>
        <begin position="311"/>
        <end position="321"/>
    </location>
</feature>
<feature type="strand" evidence="6">
    <location>
        <begin position="324"/>
        <end position="327"/>
    </location>
</feature>
<feature type="strand" evidence="5">
    <location>
        <begin position="331"/>
        <end position="335"/>
    </location>
</feature>
<feature type="helix" evidence="6">
    <location>
        <begin position="340"/>
        <end position="350"/>
    </location>
</feature>
<feature type="strand" evidence="6">
    <location>
        <begin position="352"/>
        <end position="354"/>
    </location>
</feature>
<feature type="helix" evidence="6">
    <location>
        <begin position="358"/>
        <end position="360"/>
    </location>
</feature>
<feature type="strand" evidence="6">
    <location>
        <begin position="375"/>
        <end position="378"/>
    </location>
</feature>
<feature type="helix" evidence="6">
    <location>
        <begin position="384"/>
        <end position="386"/>
    </location>
</feature>
<feature type="helix" evidence="6">
    <location>
        <begin position="387"/>
        <end position="394"/>
    </location>
</feature>
<feature type="strand" evidence="6">
    <location>
        <begin position="399"/>
        <end position="403"/>
    </location>
</feature>
<feature type="turn" evidence="6">
    <location>
        <begin position="404"/>
        <end position="408"/>
    </location>
</feature>
<feature type="strand" evidence="7">
    <location>
        <begin position="409"/>
        <end position="411"/>
    </location>
</feature>
<feature type="helix" evidence="6">
    <location>
        <begin position="414"/>
        <end position="431"/>
    </location>
</feature>
<feature type="turn" evidence="6">
    <location>
        <begin position="432"/>
        <end position="434"/>
    </location>
</feature>
<feature type="strand" evidence="6">
    <location>
        <begin position="437"/>
        <end position="440"/>
    </location>
</feature>
<feature type="helix" evidence="6">
    <location>
        <begin position="442"/>
        <end position="449"/>
    </location>
</feature>
<feature type="helix" evidence="6">
    <location>
        <begin position="455"/>
        <end position="458"/>
    </location>
</feature>
<feature type="turn" evidence="6">
    <location>
        <begin position="459"/>
        <end position="461"/>
    </location>
</feature>
<feature type="strand" evidence="7">
    <location>
        <begin position="462"/>
        <end position="464"/>
    </location>
</feature>
<comment type="function">
    <text evidence="1">RuBisCO catalyzes two reactions: the carboxylation of D-ribulose 1,5-bisphosphate, the primary event in carbon dioxide fixation, as well as the oxidative fragmentation of the pentose substrate in the photorespiration process. Both reactions occur simultaneously and in competition at the same active site.</text>
</comment>
<comment type="catalytic activity">
    <reaction evidence="1">
        <text>2 (2R)-3-phosphoglycerate + 2 H(+) = D-ribulose 1,5-bisphosphate + CO2 + H2O</text>
        <dbReference type="Rhea" id="RHEA:23124"/>
        <dbReference type="ChEBI" id="CHEBI:15377"/>
        <dbReference type="ChEBI" id="CHEBI:15378"/>
        <dbReference type="ChEBI" id="CHEBI:16526"/>
        <dbReference type="ChEBI" id="CHEBI:57870"/>
        <dbReference type="ChEBI" id="CHEBI:58272"/>
        <dbReference type="EC" id="4.1.1.39"/>
    </reaction>
</comment>
<comment type="catalytic activity">
    <reaction evidence="1">
        <text>D-ribulose 1,5-bisphosphate + O2 = 2-phosphoglycolate + (2R)-3-phosphoglycerate + 2 H(+)</text>
        <dbReference type="Rhea" id="RHEA:36631"/>
        <dbReference type="ChEBI" id="CHEBI:15378"/>
        <dbReference type="ChEBI" id="CHEBI:15379"/>
        <dbReference type="ChEBI" id="CHEBI:57870"/>
        <dbReference type="ChEBI" id="CHEBI:58033"/>
        <dbReference type="ChEBI" id="CHEBI:58272"/>
    </reaction>
</comment>
<comment type="cofactor">
    <cofactor evidence="1">
        <name>Mg(2+)</name>
        <dbReference type="ChEBI" id="CHEBI:18420"/>
    </cofactor>
    <text evidence="1">Binds 1 Mg(2+) ion per subunit.</text>
</comment>
<comment type="subunit">
    <text evidence="1">Heterohexadecamer of 8 large chains and 8 small chains; disulfide-linked. The disulfide link is formed within the large subunit homodimers.</text>
</comment>
<comment type="subcellular location">
    <subcellularLocation>
        <location>Plastid</location>
        <location>Chloroplast</location>
    </subcellularLocation>
</comment>
<comment type="PTM">
    <text evidence="1">The disulfide bond which can form in the large chain dimeric partners within the hexadecamer appears to be associated with oxidative stress and protein turnover.</text>
</comment>
<comment type="RNA editing">
    <location>
        <position position="24" evidence="2 3 4"/>
    </location>
    <location>
        <position position="40" evidence="2 3 4"/>
    </location>
    <location>
        <position position="41" evidence="2 3 4"/>
    </location>
    <location>
        <position position="45" evidence="2 3 4"/>
    </location>
    <location>
        <position position="101" evidence="2 3 4"/>
    </location>
    <location>
        <position position="104" evidence="2 3 4"/>
    </location>
    <location>
        <position position="133" evidence="2 3 4"/>
    </location>
    <location>
        <position position="138" evidence="2 3 4"/>
    </location>
    <location>
        <position position="162" evidence="2 3 4"/>
    </location>
    <location>
        <position position="226" evidence="2 3 4"/>
    </location>
    <location>
        <position position="275" evidence="2 3 4"/>
    </location>
    <location>
        <position position="301" evidence="2 3 4"/>
    </location>
    <location>
        <position position="314" evidence="2 3 4"/>
    </location>
    <location>
        <position position="318" evidence="2 3 4"/>
    </location>
    <location>
        <position position="328" evidence="2 3 4"/>
    </location>
    <location>
        <position position="339" evidence="2 3 4"/>
    </location>
    <location>
        <position position="349" evidence="2 3 4"/>
    </location>
    <location>
        <position position="350" evidence="2 3 4"/>
    </location>
    <location>
        <position position="376" evidence="2 3 4"/>
    </location>
    <text>The nonsense codons in positions 41 and 45 are modified to sense codons.</text>
</comment>
<comment type="miscellaneous">
    <text evidence="1">The basic functional RuBisCO is composed of a large chain homodimer in a 'head-to-tail' conformation. In form I RuBisCO this homodimer is arranged in a barrel-like tetramer with the small subunits forming a tetrameric 'cap' on each end of the 'barrel'.</text>
</comment>
<comment type="similarity">
    <text evidence="1">Belongs to the RuBisCO large chain family. Type I subfamily.</text>
</comment>
<evidence type="ECO:0000255" key="1">
    <source>
        <dbReference type="HAMAP-Rule" id="MF_01338"/>
    </source>
</evidence>
<evidence type="ECO:0000269" key="2">
    <source>
    </source>
</evidence>
<evidence type="ECO:0000269" key="3">
    <source>
    </source>
</evidence>
<evidence type="ECO:0000269" key="4">
    <source>
    </source>
</evidence>
<evidence type="ECO:0007829" key="5">
    <source>
        <dbReference type="PDB" id="9CHZ"/>
    </source>
</evidence>
<evidence type="ECO:0007829" key="6">
    <source>
        <dbReference type="PDB" id="9CI1"/>
    </source>
</evidence>
<evidence type="ECO:0007829" key="7">
    <source>
        <dbReference type="PDB" id="9CI2"/>
    </source>
</evidence>
<proteinExistence type="evidence at protein level"/>
<keyword id="KW-0002">3D-structure</keyword>
<keyword id="KW-0007">Acetylation</keyword>
<keyword id="KW-0113">Calvin cycle</keyword>
<keyword id="KW-0120">Carbon dioxide fixation</keyword>
<keyword id="KW-0150">Chloroplast</keyword>
<keyword id="KW-1015">Disulfide bond</keyword>
<keyword id="KW-0456">Lyase</keyword>
<keyword id="KW-0460">Magnesium</keyword>
<keyword id="KW-0479">Metal-binding</keyword>
<keyword id="KW-0488">Methylation</keyword>
<keyword id="KW-0503">Monooxygenase</keyword>
<keyword id="KW-0560">Oxidoreductase</keyword>
<keyword id="KW-0601">Photorespiration</keyword>
<keyword id="KW-0602">Photosynthesis</keyword>
<keyword id="KW-0934">Plastid</keyword>
<keyword id="KW-0691">RNA editing</keyword>
<geneLocation type="chloroplast"/>
<name>RBL_ANTAG</name>
<sequence length="475" mass="52817">MSPQTETKAGVGFKAGVKDYRLTYYTPDYETKDTDILAAFRMTPQPGVPPEEAGAAVAAESSTGTWTTVWTDGLTSLDRYKGRCYDIEPVAGEENQYIAYVAYPLDLFEEGSVTNMFTSIVGNVFGFKALRALRLEDLRIPPAYSKTFQGPPHGIQVERDKLNKYGRPLLGCTIKPKLGLSAKNYGRAVYECLRGGLDFTKDDENVNSQPFMRWRDRFLFVAEAIFKSQAETGEIKGHYLNATAGTCEEMMKRAHFARELGMPIVMHDYLTGGFTANTTLARYCRDNGLLLHIHRAMHAVIDRQRNHGIHFRVLAKALRMSGGDHIHSGTVVGKLEGEREVTLGFVDLLRDDYIEKDRSRGIYFTQDWVSMPGVLPVASGGIHVWHMSALTEIFGDDSVLQFGGGTLGHPWGNAPGAVANRVALEACVQARNEGRDLAREGNDIIREASKWSPELAAACEVWKEIKFVFETIDTL</sequence>